<accession>A2C7C1</accession>
<comment type="function">
    <text evidence="1">NDH-1 shuttles electrons from an unknown electron donor, via FMN and iron-sulfur (Fe-S) centers, to quinones in the respiratory and/or the photosynthetic chain. The immediate electron acceptor for the enzyme in this species is believed to be plastoquinone. Couples the redox reaction to proton translocation, and thus conserves the redox energy in a proton gradient. Cyanobacterial NDH-1 also plays a role in inorganic carbon-concentration.</text>
</comment>
<comment type="catalytic activity">
    <reaction evidence="1">
        <text>a plastoquinone + NADH + (n+1) H(+)(in) = a plastoquinol + NAD(+) + n H(+)(out)</text>
        <dbReference type="Rhea" id="RHEA:42608"/>
        <dbReference type="Rhea" id="RHEA-COMP:9561"/>
        <dbReference type="Rhea" id="RHEA-COMP:9562"/>
        <dbReference type="ChEBI" id="CHEBI:15378"/>
        <dbReference type="ChEBI" id="CHEBI:17757"/>
        <dbReference type="ChEBI" id="CHEBI:57540"/>
        <dbReference type="ChEBI" id="CHEBI:57945"/>
        <dbReference type="ChEBI" id="CHEBI:62192"/>
    </reaction>
</comment>
<comment type="catalytic activity">
    <reaction evidence="1">
        <text>a plastoquinone + NADPH + (n+1) H(+)(in) = a plastoquinol + NADP(+) + n H(+)(out)</text>
        <dbReference type="Rhea" id="RHEA:42612"/>
        <dbReference type="Rhea" id="RHEA-COMP:9561"/>
        <dbReference type="Rhea" id="RHEA-COMP:9562"/>
        <dbReference type="ChEBI" id="CHEBI:15378"/>
        <dbReference type="ChEBI" id="CHEBI:17757"/>
        <dbReference type="ChEBI" id="CHEBI:57783"/>
        <dbReference type="ChEBI" id="CHEBI:58349"/>
        <dbReference type="ChEBI" id="CHEBI:62192"/>
    </reaction>
</comment>
<comment type="subunit">
    <text evidence="1">NDH-1 can be composed of about 15 different subunits; different subcomplexes with different compositions have been identified which probably have different functions.</text>
</comment>
<comment type="subcellular location">
    <subcellularLocation>
        <location evidence="1">Cellular thylakoid membrane</location>
        <topology evidence="1">Multi-pass membrane protein</topology>
    </subcellularLocation>
</comment>
<comment type="similarity">
    <text evidence="1">Belongs to the complex I subunit 2 family.</text>
</comment>
<name>NU2C_PROM3</name>
<evidence type="ECO:0000255" key="1">
    <source>
        <dbReference type="HAMAP-Rule" id="MF_00445"/>
    </source>
</evidence>
<reference key="1">
    <citation type="journal article" date="2007" name="PLoS Genet.">
        <title>Patterns and implications of gene gain and loss in the evolution of Prochlorococcus.</title>
        <authorList>
            <person name="Kettler G.C."/>
            <person name="Martiny A.C."/>
            <person name="Huang K."/>
            <person name="Zucker J."/>
            <person name="Coleman M.L."/>
            <person name="Rodrigue S."/>
            <person name="Chen F."/>
            <person name="Lapidus A."/>
            <person name="Ferriera S."/>
            <person name="Johnson J."/>
            <person name="Steglich C."/>
            <person name="Church G.M."/>
            <person name="Richardson P."/>
            <person name="Chisholm S.W."/>
        </authorList>
    </citation>
    <scope>NUCLEOTIDE SEQUENCE [LARGE SCALE GENOMIC DNA]</scope>
    <source>
        <strain>MIT 9303</strain>
    </source>
</reference>
<dbReference type="EC" id="7.1.1.-" evidence="1"/>
<dbReference type="EMBL" id="CP000554">
    <property type="protein sequence ID" value="ABM77381.1"/>
    <property type="molecule type" value="Genomic_DNA"/>
</dbReference>
<dbReference type="RefSeq" id="WP_011825300.1">
    <property type="nucleotide sequence ID" value="NC_008820.1"/>
</dbReference>
<dbReference type="SMR" id="A2C7C1"/>
<dbReference type="STRING" id="59922.P9303_06291"/>
<dbReference type="KEGG" id="pmf:P9303_06291"/>
<dbReference type="HOGENOM" id="CLU_007100_1_2_3"/>
<dbReference type="BioCyc" id="PMAR59922:G1G80-579-MONOMER"/>
<dbReference type="Proteomes" id="UP000002274">
    <property type="component" value="Chromosome"/>
</dbReference>
<dbReference type="GO" id="GO:0031676">
    <property type="term" value="C:plasma membrane-derived thylakoid membrane"/>
    <property type="evidence" value="ECO:0007669"/>
    <property type="project" value="UniProtKB-SubCell"/>
</dbReference>
<dbReference type="GO" id="GO:0008137">
    <property type="term" value="F:NADH dehydrogenase (ubiquinone) activity"/>
    <property type="evidence" value="ECO:0007669"/>
    <property type="project" value="InterPro"/>
</dbReference>
<dbReference type="GO" id="GO:0048038">
    <property type="term" value="F:quinone binding"/>
    <property type="evidence" value="ECO:0007669"/>
    <property type="project" value="UniProtKB-KW"/>
</dbReference>
<dbReference type="GO" id="GO:0042773">
    <property type="term" value="P:ATP synthesis coupled electron transport"/>
    <property type="evidence" value="ECO:0007669"/>
    <property type="project" value="InterPro"/>
</dbReference>
<dbReference type="GO" id="GO:0019684">
    <property type="term" value="P:photosynthesis, light reaction"/>
    <property type="evidence" value="ECO:0007669"/>
    <property type="project" value="UniProtKB-UniRule"/>
</dbReference>
<dbReference type="HAMAP" id="MF_00445">
    <property type="entry name" value="NDH1_NuoN_1"/>
    <property type="match status" value="1"/>
</dbReference>
<dbReference type="InterPro" id="IPR010096">
    <property type="entry name" value="NADH-Q_OxRdtase_suN/2"/>
</dbReference>
<dbReference type="InterPro" id="IPR001750">
    <property type="entry name" value="ND/Mrp_TM"/>
</dbReference>
<dbReference type="NCBIfam" id="TIGR01770">
    <property type="entry name" value="NDH_I_N"/>
    <property type="match status" value="1"/>
</dbReference>
<dbReference type="NCBIfam" id="NF002701">
    <property type="entry name" value="PRK02504.1"/>
    <property type="match status" value="1"/>
</dbReference>
<dbReference type="PANTHER" id="PTHR22773">
    <property type="entry name" value="NADH DEHYDROGENASE"/>
    <property type="match status" value="1"/>
</dbReference>
<dbReference type="Pfam" id="PF00361">
    <property type="entry name" value="Proton_antipo_M"/>
    <property type="match status" value="1"/>
</dbReference>
<gene>
    <name evidence="1" type="primary">ndhB</name>
    <name type="ordered locus">P9303_06291</name>
</gene>
<feature type="chain" id="PRO_1000026151" description="NAD(P)H-quinone oxidoreductase subunit 2">
    <location>
        <begin position="1"/>
        <end position="523"/>
    </location>
</feature>
<feature type="transmembrane region" description="Helical" evidence="1">
    <location>
        <begin position="29"/>
        <end position="49"/>
    </location>
</feature>
<feature type="transmembrane region" description="Helical" evidence="1">
    <location>
        <begin position="57"/>
        <end position="77"/>
    </location>
</feature>
<feature type="transmembrane region" description="Helical" evidence="1">
    <location>
        <begin position="94"/>
        <end position="114"/>
    </location>
</feature>
<feature type="transmembrane region" description="Helical" evidence="1">
    <location>
        <begin position="123"/>
        <end position="143"/>
    </location>
</feature>
<feature type="transmembrane region" description="Helical" evidence="1">
    <location>
        <begin position="147"/>
        <end position="167"/>
    </location>
</feature>
<feature type="transmembrane region" description="Helical" evidence="1">
    <location>
        <begin position="182"/>
        <end position="202"/>
    </location>
</feature>
<feature type="transmembrane region" description="Helical" evidence="1">
    <location>
        <begin position="221"/>
        <end position="243"/>
    </location>
</feature>
<feature type="transmembrane region" description="Helical" evidence="1">
    <location>
        <begin position="255"/>
        <end position="275"/>
    </location>
</feature>
<feature type="transmembrane region" description="Helical" evidence="1">
    <location>
        <begin position="291"/>
        <end position="311"/>
    </location>
</feature>
<feature type="transmembrane region" description="Helical" evidence="1">
    <location>
        <begin position="317"/>
        <end position="337"/>
    </location>
</feature>
<feature type="transmembrane region" description="Helical" evidence="1">
    <location>
        <begin position="345"/>
        <end position="365"/>
    </location>
</feature>
<feature type="transmembrane region" description="Helical" evidence="1">
    <location>
        <begin position="389"/>
        <end position="409"/>
    </location>
</feature>
<feature type="transmembrane region" description="Helical" evidence="1">
    <location>
        <begin position="424"/>
        <end position="444"/>
    </location>
</feature>
<feature type="transmembrane region" description="Helical" evidence="1">
    <location>
        <begin position="477"/>
        <end position="497"/>
    </location>
</feature>
<proteinExistence type="inferred from homology"/>
<keyword id="KW-0472">Membrane</keyword>
<keyword id="KW-0520">NAD</keyword>
<keyword id="KW-0521">NADP</keyword>
<keyword id="KW-0618">Plastoquinone</keyword>
<keyword id="KW-0874">Quinone</keyword>
<keyword id="KW-0793">Thylakoid</keyword>
<keyword id="KW-1278">Translocase</keyword>
<keyword id="KW-0812">Transmembrane</keyword>
<keyword id="KW-1133">Transmembrane helix</keyword>
<keyword id="KW-0813">Transport</keyword>
<protein>
    <recommendedName>
        <fullName evidence="1">NAD(P)H-quinone oxidoreductase subunit 2</fullName>
        <ecNumber evidence="1">7.1.1.-</ecNumber>
    </recommendedName>
    <alternativeName>
        <fullName evidence="1">NAD(P)H dehydrogenase subunit 2</fullName>
    </alternativeName>
    <alternativeName>
        <fullName evidence="1">NADH-plastoquinone oxidoreductase subunit 2</fullName>
    </alternativeName>
    <alternativeName>
        <fullName evidence="1">NDH-1, subunit 2</fullName>
    </alternativeName>
</protein>
<sequence>MPEMGVFLLATQAMAAPGELLNLALNAGAIAPEGAVLVAMLATLLVDLAGEQAAARWVPPICYAGLGTALVLLAQQWNAPLEPSFLGAFLADNLAIAFRAVVALSTLLSLLISWRYAEQSGTPIGEYAAILLAATLGAMLLCGSTDLVSVFVSLETLSVASYLLAGYMKRDARSSEAALKYLLVGSAAAAVFLYGASLLYGLSGTTSLQAIGIALLTSPTPLAALSLVFVLATVAFKIAAVPFHQWTPDVYEGSPTPVVAFLSVGSKAAGFALALRLLVGCFGAFDNQWKLLFTVLAVLSMTLGNVVALAQTSMKRMLAYSSIGQAGFVMIGLVCGTEDGFAAMVLYMAAYLFMNLGAFACIILFSIRTGSDRISDYAGLYQKDPLITLGLSLCLLSLGGIPPMLGFFGKIYLFFAGWADHQYLLVVVGLVTSVVSIYYYISVIKMMVVKEPKEASDVVKSYPSIQWSTIGMPPLRIALVGCVVVTAVGGILSNPLFQWANNAVAGTPLLQEAIALGSQRSIG</sequence>
<organism>
    <name type="scientific">Prochlorococcus marinus (strain MIT 9303)</name>
    <dbReference type="NCBI Taxonomy" id="59922"/>
    <lineage>
        <taxon>Bacteria</taxon>
        <taxon>Bacillati</taxon>
        <taxon>Cyanobacteriota</taxon>
        <taxon>Cyanophyceae</taxon>
        <taxon>Synechococcales</taxon>
        <taxon>Prochlorococcaceae</taxon>
        <taxon>Prochlorococcus</taxon>
    </lineage>
</organism>